<organism>
    <name type="scientific">Methylobacterium radiotolerans (strain ATCC 27329 / DSM 1819 / JCM 2831 / NBRC 15690 / NCIMB 10815 / 0-1)</name>
    <dbReference type="NCBI Taxonomy" id="426355"/>
    <lineage>
        <taxon>Bacteria</taxon>
        <taxon>Pseudomonadati</taxon>
        <taxon>Pseudomonadota</taxon>
        <taxon>Alphaproteobacteria</taxon>
        <taxon>Hyphomicrobiales</taxon>
        <taxon>Methylobacteriaceae</taxon>
        <taxon>Methylobacterium</taxon>
    </lineage>
</organism>
<accession>B1M6N9</accession>
<name>TRUA_METRJ</name>
<protein>
    <recommendedName>
        <fullName evidence="1">tRNA pseudouridine synthase A</fullName>
        <ecNumber evidence="1">5.4.99.12</ecNumber>
    </recommendedName>
    <alternativeName>
        <fullName evidence="1">tRNA pseudouridine(38-40) synthase</fullName>
    </alternativeName>
    <alternativeName>
        <fullName evidence="1">tRNA pseudouridylate synthase I</fullName>
    </alternativeName>
    <alternativeName>
        <fullName evidence="1">tRNA-uridine isomerase I</fullName>
    </alternativeName>
</protein>
<feature type="chain" id="PRO_1000097762" description="tRNA pseudouridine synthase A">
    <location>
        <begin position="1"/>
        <end position="253"/>
    </location>
</feature>
<feature type="active site" description="Nucleophile" evidence="1">
    <location>
        <position position="52"/>
    </location>
</feature>
<feature type="binding site" evidence="1">
    <location>
        <position position="111"/>
    </location>
    <ligand>
        <name>substrate</name>
    </ligand>
</feature>
<sequence length="253" mass="27832">MPRYKLVIEYDGSPFCGWQRQADDPTVQGAIEAAVTRFSGENARLTCAGRTDAGVHAIHQVAHLDLAKDWRTDTVRDALNAHLRPQPVAILSAETVPDSFDARHSAIRRHYRYRILNRRSPAALTRAHVWHVPWPLDADLMHDAAQRLVGRHDFSAFRAAECQANSPIRTLEQLDVARAPMALHDEIVVATAARSFLHHQVRAMVGTLMLAGCRRLAADDVAEILASGDKSRCGPLAPAAGLTFVGVDYDPGK</sequence>
<reference key="1">
    <citation type="submission" date="2008-03" db="EMBL/GenBank/DDBJ databases">
        <title>Complete sequence of chromosome of Methylobacterium radiotolerans JCM 2831.</title>
        <authorList>
            <consortium name="US DOE Joint Genome Institute"/>
            <person name="Copeland A."/>
            <person name="Lucas S."/>
            <person name="Lapidus A."/>
            <person name="Glavina del Rio T."/>
            <person name="Dalin E."/>
            <person name="Tice H."/>
            <person name="Bruce D."/>
            <person name="Goodwin L."/>
            <person name="Pitluck S."/>
            <person name="Kiss H."/>
            <person name="Brettin T."/>
            <person name="Detter J.C."/>
            <person name="Han C."/>
            <person name="Kuske C.R."/>
            <person name="Schmutz J."/>
            <person name="Larimer F."/>
            <person name="Land M."/>
            <person name="Hauser L."/>
            <person name="Kyrpides N."/>
            <person name="Mikhailova N."/>
            <person name="Marx C.J."/>
            <person name="Richardson P."/>
        </authorList>
    </citation>
    <scope>NUCLEOTIDE SEQUENCE [LARGE SCALE GENOMIC DNA]</scope>
    <source>
        <strain>ATCC 27329 / DSM 1819 / JCM 2831 / NBRC 15690 / NCIMB 10815 / 0-1</strain>
    </source>
</reference>
<dbReference type="EC" id="5.4.99.12" evidence="1"/>
<dbReference type="EMBL" id="CP001001">
    <property type="protein sequence ID" value="ACB25130.1"/>
    <property type="molecule type" value="Genomic_DNA"/>
</dbReference>
<dbReference type="RefSeq" id="WP_012320095.1">
    <property type="nucleotide sequence ID" value="NC_010505.1"/>
</dbReference>
<dbReference type="SMR" id="B1M6N9"/>
<dbReference type="STRING" id="426355.Mrad2831_3148"/>
<dbReference type="GeneID" id="6139195"/>
<dbReference type="KEGG" id="mrd:Mrad2831_3148"/>
<dbReference type="PATRIC" id="fig|426355.14.peg.3218"/>
<dbReference type="eggNOG" id="COG0101">
    <property type="taxonomic scope" value="Bacteria"/>
</dbReference>
<dbReference type="HOGENOM" id="CLU_014673_0_2_5"/>
<dbReference type="OrthoDB" id="9811823at2"/>
<dbReference type="Proteomes" id="UP000006589">
    <property type="component" value="Chromosome"/>
</dbReference>
<dbReference type="GO" id="GO:0003723">
    <property type="term" value="F:RNA binding"/>
    <property type="evidence" value="ECO:0007669"/>
    <property type="project" value="InterPro"/>
</dbReference>
<dbReference type="GO" id="GO:0160147">
    <property type="term" value="F:tRNA pseudouridine(38-40) synthase activity"/>
    <property type="evidence" value="ECO:0007669"/>
    <property type="project" value="UniProtKB-EC"/>
</dbReference>
<dbReference type="GO" id="GO:0031119">
    <property type="term" value="P:tRNA pseudouridine synthesis"/>
    <property type="evidence" value="ECO:0007669"/>
    <property type="project" value="UniProtKB-UniRule"/>
</dbReference>
<dbReference type="CDD" id="cd02570">
    <property type="entry name" value="PseudoU_synth_EcTruA"/>
    <property type="match status" value="1"/>
</dbReference>
<dbReference type="FunFam" id="3.30.70.580:FF:000001">
    <property type="entry name" value="tRNA pseudouridine synthase A"/>
    <property type="match status" value="1"/>
</dbReference>
<dbReference type="Gene3D" id="3.30.70.660">
    <property type="entry name" value="Pseudouridine synthase I, catalytic domain, C-terminal subdomain"/>
    <property type="match status" value="1"/>
</dbReference>
<dbReference type="Gene3D" id="3.30.70.580">
    <property type="entry name" value="Pseudouridine synthase I, catalytic domain, N-terminal subdomain"/>
    <property type="match status" value="1"/>
</dbReference>
<dbReference type="HAMAP" id="MF_00171">
    <property type="entry name" value="TruA"/>
    <property type="match status" value="1"/>
</dbReference>
<dbReference type="InterPro" id="IPR020103">
    <property type="entry name" value="PsdUridine_synth_cat_dom_sf"/>
</dbReference>
<dbReference type="InterPro" id="IPR001406">
    <property type="entry name" value="PsdUridine_synth_TruA"/>
</dbReference>
<dbReference type="InterPro" id="IPR020097">
    <property type="entry name" value="PsdUridine_synth_TruA_a/b_dom"/>
</dbReference>
<dbReference type="InterPro" id="IPR020095">
    <property type="entry name" value="PsdUridine_synth_TruA_C"/>
</dbReference>
<dbReference type="InterPro" id="IPR020094">
    <property type="entry name" value="TruA/RsuA/RluB/E/F_N"/>
</dbReference>
<dbReference type="NCBIfam" id="TIGR00071">
    <property type="entry name" value="hisT_truA"/>
    <property type="match status" value="1"/>
</dbReference>
<dbReference type="PANTHER" id="PTHR11142">
    <property type="entry name" value="PSEUDOURIDYLATE SYNTHASE"/>
    <property type="match status" value="1"/>
</dbReference>
<dbReference type="PANTHER" id="PTHR11142:SF0">
    <property type="entry name" value="TRNA PSEUDOURIDINE SYNTHASE-LIKE 1"/>
    <property type="match status" value="1"/>
</dbReference>
<dbReference type="Pfam" id="PF01416">
    <property type="entry name" value="PseudoU_synth_1"/>
    <property type="match status" value="2"/>
</dbReference>
<dbReference type="PIRSF" id="PIRSF001430">
    <property type="entry name" value="tRNA_psdUrid_synth"/>
    <property type="match status" value="1"/>
</dbReference>
<dbReference type="SUPFAM" id="SSF55120">
    <property type="entry name" value="Pseudouridine synthase"/>
    <property type="match status" value="1"/>
</dbReference>
<comment type="function">
    <text evidence="1">Formation of pseudouridine at positions 38, 39 and 40 in the anticodon stem and loop of transfer RNAs.</text>
</comment>
<comment type="catalytic activity">
    <reaction evidence="1">
        <text>uridine(38/39/40) in tRNA = pseudouridine(38/39/40) in tRNA</text>
        <dbReference type="Rhea" id="RHEA:22376"/>
        <dbReference type="Rhea" id="RHEA-COMP:10085"/>
        <dbReference type="Rhea" id="RHEA-COMP:10087"/>
        <dbReference type="ChEBI" id="CHEBI:65314"/>
        <dbReference type="ChEBI" id="CHEBI:65315"/>
        <dbReference type="EC" id="5.4.99.12"/>
    </reaction>
</comment>
<comment type="subunit">
    <text evidence="1">Homodimer.</text>
</comment>
<comment type="similarity">
    <text evidence="1">Belongs to the tRNA pseudouridine synthase TruA family.</text>
</comment>
<keyword id="KW-0413">Isomerase</keyword>
<keyword id="KW-0819">tRNA processing</keyword>
<evidence type="ECO:0000255" key="1">
    <source>
        <dbReference type="HAMAP-Rule" id="MF_00171"/>
    </source>
</evidence>
<gene>
    <name evidence="1" type="primary">truA</name>
    <name type="ordered locus">Mrad2831_3148</name>
</gene>
<proteinExistence type="inferred from homology"/>